<feature type="chain" id="PRO_0000148614" description="Argininosuccinate synthase">
    <location>
        <begin position="1"/>
        <end position="399"/>
    </location>
</feature>
<feature type="binding site" evidence="1">
    <location>
        <begin position="9"/>
        <end position="17"/>
    </location>
    <ligand>
        <name>ATP</name>
        <dbReference type="ChEBI" id="CHEBI:30616"/>
    </ligand>
</feature>
<feature type="binding site" evidence="1">
    <location>
        <position position="88"/>
    </location>
    <ligand>
        <name>L-citrulline</name>
        <dbReference type="ChEBI" id="CHEBI:57743"/>
    </ligand>
</feature>
<feature type="binding site" evidence="1">
    <location>
        <position position="118"/>
    </location>
    <ligand>
        <name>ATP</name>
        <dbReference type="ChEBI" id="CHEBI:30616"/>
    </ligand>
</feature>
<feature type="binding site" evidence="1">
    <location>
        <position position="120"/>
    </location>
    <ligand>
        <name>L-aspartate</name>
        <dbReference type="ChEBI" id="CHEBI:29991"/>
    </ligand>
</feature>
<feature type="binding site" evidence="1">
    <location>
        <position position="124"/>
    </location>
    <ligand>
        <name>L-aspartate</name>
        <dbReference type="ChEBI" id="CHEBI:29991"/>
    </ligand>
</feature>
<feature type="binding site" evidence="1">
    <location>
        <position position="124"/>
    </location>
    <ligand>
        <name>L-citrulline</name>
        <dbReference type="ChEBI" id="CHEBI:57743"/>
    </ligand>
</feature>
<feature type="binding site" evidence="1">
    <location>
        <position position="125"/>
    </location>
    <ligand>
        <name>L-aspartate</name>
        <dbReference type="ChEBI" id="CHEBI:29991"/>
    </ligand>
</feature>
<feature type="binding site" evidence="1">
    <location>
        <position position="128"/>
    </location>
    <ligand>
        <name>L-citrulline</name>
        <dbReference type="ChEBI" id="CHEBI:57743"/>
    </ligand>
</feature>
<feature type="binding site" evidence="1">
    <location>
        <position position="176"/>
    </location>
    <ligand>
        <name>L-citrulline</name>
        <dbReference type="ChEBI" id="CHEBI:57743"/>
    </ligand>
</feature>
<feature type="binding site" evidence="1">
    <location>
        <position position="261"/>
    </location>
    <ligand>
        <name>L-citrulline</name>
        <dbReference type="ChEBI" id="CHEBI:57743"/>
    </ligand>
</feature>
<feature type="binding site" evidence="1">
    <location>
        <position position="273"/>
    </location>
    <ligand>
        <name>L-citrulline</name>
        <dbReference type="ChEBI" id="CHEBI:57743"/>
    </ligand>
</feature>
<reference key="1">
    <citation type="journal article" date="2001" name="Nature">
        <title>Massive gene decay in the leprosy bacillus.</title>
        <authorList>
            <person name="Cole S.T."/>
            <person name="Eiglmeier K."/>
            <person name="Parkhill J."/>
            <person name="James K.D."/>
            <person name="Thomson N.R."/>
            <person name="Wheeler P.R."/>
            <person name="Honore N."/>
            <person name="Garnier T."/>
            <person name="Churcher C.M."/>
            <person name="Harris D.E."/>
            <person name="Mungall K.L."/>
            <person name="Basham D."/>
            <person name="Brown D."/>
            <person name="Chillingworth T."/>
            <person name="Connor R."/>
            <person name="Davies R.M."/>
            <person name="Devlin K."/>
            <person name="Duthoy S."/>
            <person name="Feltwell T."/>
            <person name="Fraser A."/>
            <person name="Hamlin N."/>
            <person name="Holroyd S."/>
            <person name="Hornsby T."/>
            <person name="Jagels K."/>
            <person name="Lacroix C."/>
            <person name="Maclean J."/>
            <person name="Moule S."/>
            <person name="Murphy L.D."/>
            <person name="Oliver K."/>
            <person name="Quail M.A."/>
            <person name="Rajandream M.A."/>
            <person name="Rutherford K.M."/>
            <person name="Rutter S."/>
            <person name="Seeger K."/>
            <person name="Simon S."/>
            <person name="Simmonds M."/>
            <person name="Skelton J."/>
            <person name="Squares R."/>
            <person name="Squares S."/>
            <person name="Stevens K."/>
            <person name="Taylor K."/>
            <person name="Whitehead S."/>
            <person name="Woodward J.R."/>
            <person name="Barrell B.G."/>
        </authorList>
    </citation>
    <scope>NUCLEOTIDE SEQUENCE [LARGE SCALE GENOMIC DNA]</scope>
    <source>
        <strain>TN</strain>
    </source>
</reference>
<name>ASSY_MYCLE</name>
<proteinExistence type="inferred from homology"/>
<organism>
    <name type="scientific">Mycobacterium leprae (strain TN)</name>
    <dbReference type="NCBI Taxonomy" id="272631"/>
    <lineage>
        <taxon>Bacteria</taxon>
        <taxon>Bacillati</taxon>
        <taxon>Actinomycetota</taxon>
        <taxon>Actinomycetes</taxon>
        <taxon>Mycobacteriales</taxon>
        <taxon>Mycobacteriaceae</taxon>
        <taxon>Mycobacterium</taxon>
    </lineage>
</organism>
<evidence type="ECO:0000255" key="1">
    <source>
        <dbReference type="HAMAP-Rule" id="MF_00005"/>
    </source>
</evidence>
<comment type="catalytic activity">
    <reaction evidence="1">
        <text>L-citrulline + L-aspartate + ATP = 2-(N(omega)-L-arginino)succinate + AMP + diphosphate + H(+)</text>
        <dbReference type="Rhea" id="RHEA:10932"/>
        <dbReference type="ChEBI" id="CHEBI:15378"/>
        <dbReference type="ChEBI" id="CHEBI:29991"/>
        <dbReference type="ChEBI" id="CHEBI:30616"/>
        <dbReference type="ChEBI" id="CHEBI:33019"/>
        <dbReference type="ChEBI" id="CHEBI:57472"/>
        <dbReference type="ChEBI" id="CHEBI:57743"/>
        <dbReference type="ChEBI" id="CHEBI:456215"/>
        <dbReference type="EC" id="6.3.4.5"/>
    </reaction>
</comment>
<comment type="pathway">
    <text evidence="1">Amino-acid biosynthesis; L-arginine biosynthesis; L-arginine from L-ornithine and carbamoyl phosphate: step 2/3.</text>
</comment>
<comment type="subunit">
    <text evidence="1">Homotetramer.</text>
</comment>
<comment type="subcellular location">
    <subcellularLocation>
        <location evidence="1">Cytoplasm</location>
    </subcellularLocation>
</comment>
<comment type="similarity">
    <text evidence="1">Belongs to the argininosuccinate synthase family. Type 1 subfamily.</text>
</comment>
<sequence length="399" mass="43916">MMPERIILAYSGGLDTSVAINWIGKETSHEVVAVVIDLGQGGEDMEVVRQRALDCGAVEAIVVDARDEFAEGYCLPTVLNNALYMDRYPLVSAISRPLIVKHLVAAARAHGGSIVAHGCTGKGNDQVRFEVGFASLAPDLEILAPVRDYAWTREKAIAFAEENAIPINVTKRSPFSIDQNVWGRAVETGFLEHLWHAPTKEVYSYTDDPTINWNTPDEVIVGFEHGVPVSIDGSPVSMLGAIEALNRRAGAQGVGRLDVVEDRLVGIKSREIYEAPGAMVLITAHAELEHVTLERELGRFKRQTDRRWAELVYDGLWYSPLKTALESFVAATQQHVTGEVRMVLHGGHIAVNGRRSAESLYDFNLATYDEGDTFDQSAARGFVYVYGLPSKLAARRDLR</sequence>
<dbReference type="EC" id="6.3.4.5" evidence="1"/>
<dbReference type="EMBL" id="AL583922">
    <property type="protein sequence ID" value="CAC30363.1"/>
    <property type="molecule type" value="Genomic_DNA"/>
</dbReference>
<dbReference type="PIR" id="F87085">
    <property type="entry name" value="F87085"/>
</dbReference>
<dbReference type="RefSeq" id="NP_302005.1">
    <property type="nucleotide sequence ID" value="NC_002677.1"/>
</dbReference>
<dbReference type="SMR" id="Q9CC10"/>
<dbReference type="STRING" id="272631.gene:17575251"/>
<dbReference type="KEGG" id="mle:ML1412"/>
<dbReference type="PATRIC" id="fig|272631.5.peg.2617"/>
<dbReference type="Leproma" id="ML1412"/>
<dbReference type="eggNOG" id="COG0137">
    <property type="taxonomic scope" value="Bacteria"/>
</dbReference>
<dbReference type="HOGENOM" id="CLU_032784_4_2_11"/>
<dbReference type="OrthoDB" id="9801641at2"/>
<dbReference type="UniPathway" id="UPA00068">
    <property type="reaction ID" value="UER00113"/>
</dbReference>
<dbReference type="Proteomes" id="UP000000806">
    <property type="component" value="Chromosome"/>
</dbReference>
<dbReference type="GO" id="GO:0005737">
    <property type="term" value="C:cytoplasm"/>
    <property type="evidence" value="ECO:0007669"/>
    <property type="project" value="UniProtKB-SubCell"/>
</dbReference>
<dbReference type="GO" id="GO:0004055">
    <property type="term" value="F:argininosuccinate synthase activity"/>
    <property type="evidence" value="ECO:0007669"/>
    <property type="project" value="UniProtKB-UniRule"/>
</dbReference>
<dbReference type="GO" id="GO:0005524">
    <property type="term" value="F:ATP binding"/>
    <property type="evidence" value="ECO:0007669"/>
    <property type="project" value="UniProtKB-UniRule"/>
</dbReference>
<dbReference type="GO" id="GO:0000053">
    <property type="term" value="P:argininosuccinate metabolic process"/>
    <property type="evidence" value="ECO:0007669"/>
    <property type="project" value="TreeGrafter"/>
</dbReference>
<dbReference type="GO" id="GO:0006526">
    <property type="term" value="P:L-arginine biosynthetic process"/>
    <property type="evidence" value="ECO:0007669"/>
    <property type="project" value="UniProtKB-UniRule"/>
</dbReference>
<dbReference type="GO" id="GO:0000050">
    <property type="term" value="P:urea cycle"/>
    <property type="evidence" value="ECO:0007669"/>
    <property type="project" value="TreeGrafter"/>
</dbReference>
<dbReference type="CDD" id="cd01999">
    <property type="entry name" value="ASS"/>
    <property type="match status" value="1"/>
</dbReference>
<dbReference type="FunFam" id="3.40.50.620:FF:000038">
    <property type="entry name" value="Argininosuccinate synthase"/>
    <property type="match status" value="1"/>
</dbReference>
<dbReference type="FunFam" id="3.90.1260.10:FF:000007">
    <property type="entry name" value="Argininosuccinate synthase"/>
    <property type="match status" value="1"/>
</dbReference>
<dbReference type="Gene3D" id="3.90.1260.10">
    <property type="entry name" value="Argininosuccinate synthetase, chain A, domain 2"/>
    <property type="match status" value="1"/>
</dbReference>
<dbReference type="Gene3D" id="3.40.50.620">
    <property type="entry name" value="HUPs"/>
    <property type="match status" value="1"/>
</dbReference>
<dbReference type="Gene3D" id="1.20.5.470">
    <property type="entry name" value="Single helix bin"/>
    <property type="match status" value="1"/>
</dbReference>
<dbReference type="HAMAP" id="MF_00005">
    <property type="entry name" value="Arg_succ_synth_type1"/>
    <property type="match status" value="1"/>
</dbReference>
<dbReference type="InterPro" id="IPR048268">
    <property type="entry name" value="Arginosuc_syn_C"/>
</dbReference>
<dbReference type="InterPro" id="IPR048267">
    <property type="entry name" value="Arginosuc_syn_N"/>
</dbReference>
<dbReference type="InterPro" id="IPR001518">
    <property type="entry name" value="Arginosuc_synth"/>
</dbReference>
<dbReference type="InterPro" id="IPR018223">
    <property type="entry name" value="Arginosuc_synth_CS"/>
</dbReference>
<dbReference type="InterPro" id="IPR023434">
    <property type="entry name" value="Arginosuc_synth_type_1_subfam"/>
</dbReference>
<dbReference type="InterPro" id="IPR024074">
    <property type="entry name" value="AS_cat/multimer_dom_body"/>
</dbReference>
<dbReference type="InterPro" id="IPR014729">
    <property type="entry name" value="Rossmann-like_a/b/a_fold"/>
</dbReference>
<dbReference type="NCBIfam" id="TIGR00032">
    <property type="entry name" value="argG"/>
    <property type="match status" value="1"/>
</dbReference>
<dbReference type="NCBIfam" id="NF001770">
    <property type="entry name" value="PRK00509.1"/>
    <property type="match status" value="1"/>
</dbReference>
<dbReference type="PANTHER" id="PTHR11587">
    <property type="entry name" value="ARGININOSUCCINATE SYNTHASE"/>
    <property type="match status" value="1"/>
</dbReference>
<dbReference type="PANTHER" id="PTHR11587:SF2">
    <property type="entry name" value="ARGININOSUCCINATE SYNTHASE"/>
    <property type="match status" value="1"/>
</dbReference>
<dbReference type="Pfam" id="PF20979">
    <property type="entry name" value="Arginosuc_syn_C"/>
    <property type="match status" value="1"/>
</dbReference>
<dbReference type="Pfam" id="PF00764">
    <property type="entry name" value="Arginosuc_synth"/>
    <property type="match status" value="1"/>
</dbReference>
<dbReference type="SUPFAM" id="SSF52402">
    <property type="entry name" value="Adenine nucleotide alpha hydrolases-like"/>
    <property type="match status" value="1"/>
</dbReference>
<dbReference type="SUPFAM" id="SSF69864">
    <property type="entry name" value="Argininosuccinate synthetase, C-terminal domain"/>
    <property type="match status" value="1"/>
</dbReference>
<dbReference type="PROSITE" id="PS00564">
    <property type="entry name" value="ARGININOSUCCIN_SYN_1"/>
    <property type="match status" value="1"/>
</dbReference>
<dbReference type="PROSITE" id="PS00565">
    <property type="entry name" value="ARGININOSUCCIN_SYN_2"/>
    <property type="match status" value="1"/>
</dbReference>
<protein>
    <recommendedName>
        <fullName evidence="1">Argininosuccinate synthase</fullName>
        <ecNumber evidence="1">6.3.4.5</ecNumber>
    </recommendedName>
    <alternativeName>
        <fullName evidence="1">Citrulline--aspartate ligase</fullName>
    </alternativeName>
</protein>
<accession>Q9CC10</accession>
<gene>
    <name evidence="1" type="primary">argG</name>
    <name type="ordered locus">ML1412</name>
</gene>
<keyword id="KW-0028">Amino-acid biosynthesis</keyword>
<keyword id="KW-0055">Arginine biosynthesis</keyword>
<keyword id="KW-0067">ATP-binding</keyword>
<keyword id="KW-0963">Cytoplasm</keyword>
<keyword id="KW-0436">Ligase</keyword>
<keyword id="KW-0547">Nucleotide-binding</keyword>
<keyword id="KW-1185">Reference proteome</keyword>